<protein>
    <recommendedName>
        <fullName>Peroxide-responsive repressor PerR</fullName>
    </recommendedName>
</protein>
<gene>
    <name type="primary">perR</name>
    <name type="ordered locus">SSP0932</name>
</gene>
<evidence type="ECO:0000250" key="1"/>
<evidence type="ECO:0000305" key="2"/>
<name>PERR_STAS1</name>
<feature type="chain" id="PRO_0000289022" description="Peroxide-responsive repressor PerR">
    <location>
        <begin position="1"/>
        <end position="148"/>
    </location>
</feature>
<feature type="region of interest" description="DNA-binding" evidence="1">
    <location>
        <begin position="1"/>
        <end position="84"/>
    </location>
</feature>
<feature type="binding site" evidence="1">
    <location>
        <position position="102"/>
    </location>
    <ligand>
        <name>Zn(2+)</name>
        <dbReference type="ChEBI" id="CHEBI:29105"/>
    </ligand>
</feature>
<feature type="binding site" evidence="1">
    <location>
        <position position="105"/>
    </location>
    <ligand>
        <name>Zn(2+)</name>
        <dbReference type="ChEBI" id="CHEBI:29105"/>
    </ligand>
</feature>
<feature type="binding site" evidence="1">
    <location>
        <position position="142"/>
    </location>
    <ligand>
        <name>Zn(2+)</name>
        <dbReference type="ChEBI" id="CHEBI:29105"/>
    </ligand>
</feature>
<feature type="binding site" evidence="1">
    <location>
        <position position="145"/>
    </location>
    <ligand>
        <name>Zn(2+)</name>
        <dbReference type="ChEBI" id="CHEBI:29105"/>
    </ligand>
</feature>
<organism>
    <name type="scientific">Staphylococcus saprophyticus subsp. saprophyticus (strain ATCC 15305 / DSM 20229 / NCIMB 8711 / NCTC 7292 / S-41)</name>
    <dbReference type="NCBI Taxonomy" id="342451"/>
    <lineage>
        <taxon>Bacteria</taxon>
        <taxon>Bacillati</taxon>
        <taxon>Bacillota</taxon>
        <taxon>Bacilli</taxon>
        <taxon>Bacillales</taxon>
        <taxon>Staphylococcaceae</taxon>
        <taxon>Staphylococcus</taxon>
    </lineage>
</organism>
<reference key="1">
    <citation type="journal article" date="2005" name="Proc. Natl. Acad. Sci. U.S.A.">
        <title>Whole genome sequence of Staphylococcus saprophyticus reveals the pathogenesis of uncomplicated urinary tract infection.</title>
        <authorList>
            <person name="Kuroda M."/>
            <person name="Yamashita A."/>
            <person name="Hirakawa H."/>
            <person name="Kumano M."/>
            <person name="Morikawa K."/>
            <person name="Higashide M."/>
            <person name="Maruyama A."/>
            <person name="Inose Y."/>
            <person name="Matoba K."/>
            <person name="Toh H."/>
            <person name="Kuhara S."/>
            <person name="Hattori M."/>
            <person name="Ohta T."/>
        </authorList>
    </citation>
    <scope>NUCLEOTIDE SEQUENCE [LARGE SCALE GENOMIC DNA]</scope>
    <source>
        <strain>ATCC 15305 / DSM 20229 / NCIMB 8711 / NCTC 7292 / S-41</strain>
    </source>
</reference>
<keyword id="KW-0963">Cytoplasm</keyword>
<keyword id="KW-0238">DNA-binding</keyword>
<keyword id="KW-0464">Manganese</keyword>
<keyword id="KW-0479">Metal-binding</keyword>
<keyword id="KW-1185">Reference proteome</keyword>
<keyword id="KW-0678">Repressor</keyword>
<keyword id="KW-0804">Transcription</keyword>
<keyword id="KW-0805">Transcription regulation</keyword>
<keyword id="KW-0862">Zinc</keyword>
<proteinExistence type="inferred from homology"/>
<accession>Q49YQ6</accession>
<sequence>MSAELETIEHQLEDSITSLRNNGVRITPQRQAILKFLIASHTHPTADEIYQALSPDFPNISVATIYNNLRVFKDIGIVKELPYGDSSSRFDFSTHNHYHVICEQCGKIVDFHYPQLDEVEQLAQHVTDFNVTHHRMEIYGLCKDCQDK</sequence>
<comment type="function">
    <text evidence="1">Manganese-dependent repressor that controls a regulon of oxidative stress resistance and iron-storage proteins. May act as a hydrogen peroxide and organic hydroperoxide sensor (By similarity).</text>
</comment>
<comment type="subcellular location">
    <subcellularLocation>
        <location evidence="1">Cytoplasm</location>
    </subcellularLocation>
</comment>
<comment type="similarity">
    <text evidence="2">Belongs to the Fur family.</text>
</comment>
<dbReference type="EMBL" id="AP008934">
    <property type="protein sequence ID" value="BAE18077.1"/>
    <property type="molecule type" value="Genomic_DNA"/>
</dbReference>
<dbReference type="RefSeq" id="WP_002482869.1">
    <property type="nucleotide sequence ID" value="NZ_MTGA01000031.1"/>
</dbReference>
<dbReference type="SMR" id="Q49YQ6"/>
<dbReference type="GeneID" id="66867087"/>
<dbReference type="KEGG" id="ssp:SSP0932"/>
<dbReference type="eggNOG" id="COG0735">
    <property type="taxonomic scope" value="Bacteria"/>
</dbReference>
<dbReference type="HOGENOM" id="CLU_096072_4_2_9"/>
<dbReference type="OrthoDB" id="8659436at2"/>
<dbReference type="Proteomes" id="UP000006371">
    <property type="component" value="Chromosome"/>
</dbReference>
<dbReference type="GO" id="GO:0005737">
    <property type="term" value="C:cytoplasm"/>
    <property type="evidence" value="ECO:0007669"/>
    <property type="project" value="UniProtKB-SubCell"/>
</dbReference>
<dbReference type="GO" id="GO:0003700">
    <property type="term" value="F:DNA-binding transcription factor activity"/>
    <property type="evidence" value="ECO:0007669"/>
    <property type="project" value="InterPro"/>
</dbReference>
<dbReference type="GO" id="GO:0000976">
    <property type="term" value="F:transcription cis-regulatory region binding"/>
    <property type="evidence" value="ECO:0007669"/>
    <property type="project" value="TreeGrafter"/>
</dbReference>
<dbReference type="GO" id="GO:0008270">
    <property type="term" value="F:zinc ion binding"/>
    <property type="evidence" value="ECO:0007669"/>
    <property type="project" value="TreeGrafter"/>
</dbReference>
<dbReference type="GO" id="GO:0045892">
    <property type="term" value="P:negative regulation of DNA-templated transcription"/>
    <property type="evidence" value="ECO:0007669"/>
    <property type="project" value="TreeGrafter"/>
</dbReference>
<dbReference type="GO" id="GO:1900376">
    <property type="term" value="P:regulation of secondary metabolite biosynthetic process"/>
    <property type="evidence" value="ECO:0007669"/>
    <property type="project" value="TreeGrafter"/>
</dbReference>
<dbReference type="CDD" id="cd07153">
    <property type="entry name" value="Fur_like"/>
    <property type="match status" value="1"/>
</dbReference>
<dbReference type="FunFam" id="3.30.1490.190:FF:000003">
    <property type="entry name" value="Fur family transcriptional regulator"/>
    <property type="match status" value="1"/>
</dbReference>
<dbReference type="Gene3D" id="3.30.1490.190">
    <property type="match status" value="1"/>
</dbReference>
<dbReference type="Gene3D" id="1.10.10.10">
    <property type="entry name" value="Winged helix-like DNA-binding domain superfamily/Winged helix DNA-binding domain"/>
    <property type="match status" value="1"/>
</dbReference>
<dbReference type="InterPro" id="IPR002481">
    <property type="entry name" value="FUR"/>
</dbReference>
<dbReference type="InterPro" id="IPR043135">
    <property type="entry name" value="Fur_C"/>
</dbReference>
<dbReference type="InterPro" id="IPR036388">
    <property type="entry name" value="WH-like_DNA-bd_sf"/>
</dbReference>
<dbReference type="InterPro" id="IPR036390">
    <property type="entry name" value="WH_DNA-bd_sf"/>
</dbReference>
<dbReference type="PANTHER" id="PTHR33202:SF8">
    <property type="entry name" value="PEROXIDE-RESPONSIVE REPRESSOR PERR"/>
    <property type="match status" value="1"/>
</dbReference>
<dbReference type="PANTHER" id="PTHR33202">
    <property type="entry name" value="ZINC UPTAKE REGULATION PROTEIN"/>
    <property type="match status" value="1"/>
</dbReference>
<dbReference type="Pfam" id="PF01475">
    <property type="entry name" value="FUR"/>
    <property type="match status" value="1"/>
</dbReference>
<dbReference type="SUPFAM" id="SSF46785">
    <property type="entry name" value="Winged helix' DNA-binding domain"/>
    <property type="match status" value="1"/>
</dbReference>